<feature type="chain" id="PRO_0000162438" description="Regulatory protein RecX">
    <location>
        <begin position="1"/>
        <end position="271"/>
    </location>
</feature>
<name>RECX_LACJO</name>
<keyword id="KW-0963">Cytoplasm</keyword>
<sequence length="271" mass="31388">MPIITKISTQKRKGRYNIFIDNEYAFSVSERTLAEKRLLKGTELSLEDIEKIKKAEADSHALQLAMSYLSYQPRSVYEVLTYLNKQGISPEASQSAIENLIELNYLDDNNFARLFIQNNLRVGKDGPRSISSKLKQKGVANDIIQDSLYEVDDEEWIEAGMRLIHSIGHQVGKMSYKEIKQKALKKLQTHGFNQELGELVVDQLDLESTEDDQLEALKKQGIKAWRRYRRDDDFKRRQKVKRYLFQHGFSSGEIDSFLSGEVVNLEEIDEY</sequence>
<dbReference type="EMBL" id="AE017198">
    <property type="protein sequence ID" value="AAS09375.1"/>
    <property type="molecule type" value="Genomic_DNA"/>
</dbReference>
<dbReference type="RefSeq" id="WP_011162305.1">
    <property type="nucleotide sequence ID" value="NC_005362.1"/>
</dbReference>
<dbReference type="SMR" id="Q74IG3"/>
<dbReference type="GeneID" id="83570800"/>
<dbReference type="KEGG" id="ljo:LJ_1605"/>
<dbReference type="eggNOG" id="COG2137">
    <property type="taxonomic scope" value="Bacteria"/>
</dbReference>
<dbReference type="HOGENOM" id="CLU_066607_4_0_9"/>
<dbReference type="Proteomes" id="UP000000581">
    <property type="component" value="Chromosome"/>
</dbReference>
<dbReference type="GO" id="GO:0005737">
    <property type="term" value="C:cytoplasm"/>
    <property type="evidence" value="ECO:0007669"/>
    <property type="project" value="UniProtKB-SubCell"/>
</dbReference>
<dbReference type="GO" id="GO:0006282">
    <property type="term" value="P:regulation of DNA repair"/>
    <property type="evidence" value="ECO:0007669"/>
    <property type="project" value="UniProtKB-UniRule"/>
</dbReference>
<dbReference type="Gene3D" id="1.10.10.10">
    <property type="entry name" value="Winged helix-like DNA-binding domain superfamily/Winged helix DNA-binding domain"/>
    <property type="match status" value="3"/>
</dbReference>
<dbReference type="HAMAP" id="MF_01114">
    <property type="entry name" value="RecX"/>
    <property type="match status" value="1"/>
</dbReference>
<dbReference type="InterPro" id="IPR053926">
    <property type="entry name" value="RecX_HTH_1st"/>
</dbReference>
<dbReference type="InterPro" id="IPR053924">
    <property type="entry name" value="RecX_HTH_2nd"/>
</dbReference>
<dbReference type="InterPro" id="IPR053925">
    <property type="entry name" value="RecX_HTH_3rd"/>
</dbReference>
<dbReference type="InterPro" id="IPR003783">
    <property type="entry name" value="Regulatory_RecX"/>
</dbReference>
<dbReference type="InterPro" id="IPR036388">
    <property type="entry name" value="WH-like_DNA-bd_sf"/>
</dbReference>
<dbReference type="NCBIfam" id="NF010733">
    <property type="entry name" value="PRK14135.1"/>
    <property type="match status" value="1"/>
</dbReference>
<dbReference type="PANTHER" id="PTHR33602">
    <property type="entry name" value="REGULATORY PROTEIN RECX FAMILY PROTEIN"/>
    <property type="match status" value="1"/>
</dbReference>
<dbReference type="PANTHER" id="PTHR33602:SF1">
    <property type="entry name" value="REGULATORY PROTEIN RECX FAMILY PROTEIN"/>
    <property type="match status" value="1"/>
</dbReference>
<dbReference type="Pfam" id="PF21982">
    <property type="entry name" value="RecX_HTH1"/>
    <property type="match status" value="1"/>
</dbReference>
<dbReference type="Pfam" id="PF02631">
    <property type="entry name" value="RecX_HTH2"/>
    <property type="match status" value="1"/>
</dbReference>
<dbReference type="Pfam" id="PF21981">
    <property type="entry name" value="RecX_HTH3"/>
    <property type="match status" value="1"/>
</dbReference>
<comment type="function">
    <text evidence="1">Modulates RecA activity.</text>
</comment>
<comment type="subcellular location">
    <subcellularLocation>
        <location evidence="1">Cytoplasm</location>
    </subcellularLocation>
</comment>
<comment type="similarity">
    <text evidence="1">Belongs to the RecX family.</text>
</comment>
<organism>
    <name type="scientific">Lactobacillus johnsonii (strain CNCM I-12250 / La1 / NCC 533)</name>
    <dbReference type="NCBI Taxonomy" id="257314"/>
    <lineage>
        <taxon>Bacteria</taxon>
        <taxon>Bacillati</taxon>
        <taxon>Bacillota</taxon>
        <taxon>Bacilli</taxon>
        <taxon>Lactobacillales</taxon>
        <taxon>Lactobacillaceae</taxon>
        <taxon>Lactobacillus</taxon>
    </lineage>
</organism>
<evidence type="ECO:0000255" key="1">
    <source>
        <dbReference type="HAMAP-Rule" id="MF_01114"/>
    </source>
</evidence>
<proteinExistence type="inferred from homology"/>
<reference key="1">
    <citation type="journal article" date="2004" name="Proc. Natl. Acad. Sci. U.S.A.">
        <title>The genome sequence of the probiotic intestinal bacterium Lactobacillus johnsonii NCC 533.</title>
        <authorList>
            <person name="Pridmore R.D."/>
            <person name="Berger B."/>
            <person name="Desiere F."/>
            <person name="Vilanova D."/>
            <person name="Barretto C."/>
            <person name="Pittet A.-C."/>
            <person name="Zwahlen M.-C."/>
            <person name="Rouvet M."/>
            <person name="Altermann E."/>
            <person name="Barrangou R."/>
            <person name="Mollet B."/>
            <person name="Mercenier A."/>
            <person name="Klaenhammer T."/>
            <person name="Arigoni F."/>
            <person name="Schell M.A."/>
        </authorList>
    </citation>
    <scope>NUCLEOTIDE SEQUENCE [LARGE SCALE GENOMIC DNA]</scope>
    <source>
        <strain>CNCM I-1225 / La1 / NCC 533</strain>
    </source>
</reference>
<gene>
    <name evidence="1" type="primary">recX</name>
    <name type="ordered locus">LJ_1605</name>
</gene>
<accession>Q74IG3</accession>
<protein>
    <recommendedName>
        <fullName evidence="1">Regulatory protein RecX</fullName>
    </recommendedName>
</protein>